<keyword id="KW-0560">Oxidoreductase</keyword>
<reference key="1">
    <citation type="journal article" date="2006" name="Mol. Microbiol.">
        <title>Role of pathogenicity island-associated integrases in the genome plasticity of uropathogenic Escherichia coli strain 536.</title>
        <authorList>
            <person name="Hochhut B."/>
            <person name="Wilde C."/>
            <person name="Balling G."/>
            <person name="Middendorf B."/>
            <person name="Dobrindt U."/>
            <person name="Brzuszkiewicz E."/>
            <person name="Gottschalk G."/>
            <person name="Carniel E."/>
            <person name="Hacker J."/>
        </authorList>
    </citation>
    <scope>NUCLEOTIDE SEQUENCE [LARGE SCALE GENOMIC DNA]</scope>
    <source>
        <strain>536 / UPEC</strain>
    </source>
</reference>
<feature type="chain" id="PRO_1000068326" description="Peptide methionine sulfoxide reductase MsrA">
    <location>
        <begin position="1"/>
        <end position="212"/>
    </location>
</feature>
<feature type="active site" evidence="1">
    <location>
        <position position="52"/>
    </location>
</feature>
<organism>
    <name type="scientific">Escherichia coli O6:K15:H31 (strain 536 / UPEC)</name>
    <dbReference type="NCBI Taxonomy" id="362663"/>
    <lineage>
        <taxon>Bacteria</taxon>
        <taxon>Pseudomonadati</taxon>
        <taxon>Pseudomonadota</taxon>
        <taxon>Gammaproteobacteria</taxon>
        <taxon>Enterobacterales</taxon>
        <taxon>Enterobacteriaceae</taxon>
        <taxon>Escherichia</taxon>
    </lineage>
</organism>
<name>MSRA_ECOL5</name>
<accession>Q0T9G6</accession>
<comment type="function">
    <text evidence="1">Has an important function as a repair enzyme for proteins that have been inactivated by oxidation. Catalyzes the reversible oxidation-reduction of methionine sulfoxide in proteins to methionine.</text>
</comment>
<comment type="catalytic activity">
    <reaction evidence="1">
        <text>L-methionyl-[protein] + [thioredoxin]-disulfide + H2O = L-methionyl-(S)-S-oxide-[protein] + [thioredoxin]-dithiol</text>
        <dbReference type="Rhea" id="RHEA:14217"/>
        <dbReference type="Rhea" id="RHEA-COMP:10698"/>
        <dbReference type="Rhea" id="RHEA-COMP:10700"/>
        <dbReference type="Rhea" id="RHEA-COMP:12313"/>
        <dbReference type="Rhea" id="RHEA-COMP:12315"/>
        <dbReference type="ChEBI" id="CHEBI:15377"/>
        <dbReference type="ChEBI" id="CHEBI:16044"/>
        <dbReference type="ChEBI" id="CHEBI:29950"/>
        <dbReference type="ChEBI" id="CHEBI:44120"/>
        <dbReference type="ChEBI" id="CHEBI:50058"/>
        <dbReference type="EC" id="1.8.4.11"/>
    </reaction>
</comment>
<comment type="catalytic activity">
    <reaction evidence="1">
        <text>[thioredoxin]-disulfide + L-methionine + H2O = L-methionine (S)-S-oxide + [thioredoxin]-dithiol</text>
        <dbReference type="Rhea" id="RHEA:19993"/>
        <dbReference type="Rhea" id="RHEA-COMP:10698"/>
        <dbReference type="Rhea" id="RHEA-COMP:10700"/>
        <dbReference type="ChEBI" id="CHEBI:15377"/>
        <dbReference type="ChEBI" id="CHEBI:29950"/>
        <dbReference type="ChEBI" id="CHEBI:50058"/>
        <dbReference type="ChEBI" id="CHEBI:57844"/>
        <dbReference type="ChEBI" id="CHEBI:58772"/>
        <dbReference type="EC" id="1.8.4.11"/>
    </reaction>
</comment>
<comment type="similarity">
    <text evidence="1">Belongs to the MsrA Met sulfoxide reductase family.</text>
</comment>
<gene>
    <name evidence="1" type="primary">msrA</name>
    <name type="ordered locus">ECP_4472</name>
</gene>
<protein>
    <recommendedName>
        <fullName evidence="1">Peptide methionine sulfoxide reductase MsrA</fullName>
        <shortName evidence="1">Protein-methionine-S-oxide reductase</shortName>
        <ecNumber evidence="1">1.8.4.11</ecNumber>
    </recommendedName>
    <alternativeName>
        <fullName evidence="1">Peptide-methionine (S)-S-oxide reductase</fullName>
        <shortName evidence="1">Peptide Met(O) reductase</shortName>
    </alternativeName>
</protein>
<proteinExistence type="inferred from homology"/>
<dbReference type="EC" id="1.8.4.11" evidence="1"/>
<dbReference type="EMBL" id="CP000247">
    <property type="protein sequence ID" value="ABG72413.1"/>
    <property type="molecule type" value="Genomic_DNA"/>
</dbReference>
<dbReference type="RefSeq" id="WP_001298072.1">
    <property type="nucleotide sequence ID" value="NC_008253.1"/>
</dbReference>
<dbReference type="SMR" id="Q0T9G6"/>
<dbReference type="KEGG" id="ecp:ECP_4472"/>
<dbReference type="HOGENOM" id="CLU_031040_10_3_6"/>
<dbReference type="Proteomes" id="UP000009182">
    <property type="component" value="Chromosome"/>
</dbReference>
<dbReference type="GO" id="GO:0005737">
    <property type="term" value="C:cytoplasm"/>
    <property type="evidence" value="ECO:0007669"/>
    <property type="project" value="TreeGrafter"/>
</dbReference>
<dbReference type="GO" id="GO:0036456">
    <property type="term" value="F:L-methionine-(S)-S-oxide reductase activity"/>
    <property type="evidence" value="ECO:0007669"/>
    <property type="project" value="TreeGrafter"/>
</dbReference>
<dbReference type="GO" id="GO:0008113">
    <property type="term" value="F:peptide-methionine (S)-S-oxide reductase activity"/>
    <property type="evidence" value="ECO:0007669"/>
    <property type="project" value="UniProtKB-UniRule"/>
</dbReference>
<dbReference type="GO" id="GO:0034599">
    <property type="term" value="P:cellular response to oxidative stress"/>
    <property type="evidence" value="ECO:0007669"/>
    <property type="project" value="TreeGrafter"/>
</dbReference>
<dbReference type="GO" id="GO:0036211">
    <property type="term" value="P:protein modification process"/>
    <property type="evidence" value="ECO:0007669"/>
    <property type="project" value="UniProtKB-UniRule"/>
</dbReference>
<dbReference type="FunFam" id="3.30.1060.10:FF:000001">
    <property type="entry name" value="Peptide methionine sulfoxide reductase MsrA"/>
    <property type="match status" value="1"/>
</dbReference>
<dbReference type="Gene3D" id="3.30.1060.10">
    <property type="entry name" value="Peptide methionine sulphoxide reductase MsrA"/>
    <property type="match status" value="1"/>
</dbReference>
<dbReference type="HAMAP" id="MF_01401">
    <property type="entry name" value="MsrA"/>
    <property type="match status" value="1"/>
</dbReference>
<dbReference type="InterPro" id="IPR002569">
    <property type="entry name" value="Met_Sox_Rdtase_MsrA_dom"/>
</dbReference>
<dbReference type="InterPro" id="IPR036509">
    <property type="entry name" value="Met_Sox_Rdtase_MsrA_sf"/>
</dbReference>
<dbReference type="InterPro" id="IPR050162">
    <property type="entry name" value="MsrA_MetSO_reductase"/>
</dbReference>
<dbReference type="NCBIfam" id="TIGR00401">
    <property type="entry name" value="msrA"/>
    <property type="match status" value="1"/>
</dbReference>
<dbReference type="PANTHER" id="PTHR42799">
    <property type="entry name" value="MITOCHONDRIAL PEPTIDE METHIONINE SULFOXIDE REDUCTASE"/>
    <property type="match status" value="1"/>
</dbReference>
<dbReference type="PANTHER" id="PTHR42799:SF2">
    <property type="entry name" value="MITOCHONDRIAL PEPTIDE METHIONINE SULFOXIDE REDUCTASE"/>
    <property type="match status" value="1"/>
</dbReference>
<dbReference type="Pfam" id="PF01625">
    <property type="entry name" value="PMSR"/>
    <property type="match status" value="1"/>
</dbReference>
<dbReference type="SUPFAM" id="SSF55068">
    <property type="entry name" value="Peptide methionine sulfoxide reductase"/>
    <property type="match status" value="1"/>
</dbReference>
<sequence>MSLFDKKHLVSPADALPGRNTPMPVATLHAVNGHSMTNVPDGMEIAIFAMGCFWGVERLFWQLPGVYSTAAGYTGGYTPNPTYREVCSGDTGHAEAVRIVYDPSVISYEQLLQVFWENHDPAQGMRQGNDHSTQYRSAIYPLTPEQDAAARASLERFQAAMLAADDDRRITTEIANATPFYYAEDDHQQYLHKNPYGYCGIGGIGVCLPPEA</sequence>
<evidence type="ECO:0000255" key="1">
    <source>
        <dbReference type="HAMAP-Rule" id="MF_01401"/>
    </source>
</evidence>